<evidence type="ECO:0000250" key="1"/>
<evidence type="ECO:0000250" key="2">
    <source>
        <dbReference type="UniProtKB" id="Q9JLJ1"/>
    </source>
</evidence>
<evidence type="ECO:0000255" key="3"/>
<evidence type="ECO:0000256" key="4">
    <source>
        <dbReference type="SAM" id="MobiDB-lite"/>
    </source>
</evidence>
<evidence type="ECO:0000269" key="5">
    <source>
    </source>
</evidence>
<evidence type="ECO:0000269" key="6">
    <source>
    </source>
</evidence>
<evidence type="ECO:0000269" key="7">
    <source>
    </source>
</evidence>
<evidence type="ECO:0000269" key="8">
    <source>
    </source>
</evidence>
<evidence type="ECO:0000269" key="9">
    <source>
    </source>
</evidence>
<evidence type="ECO:0000269" key="10">
    <source>
    </source>
</evidence>
<evidence type="ECO:0000269" key="11">
    <source>
    </source>
</evidence>
<evidence type="ECO:0000269" key="12">
    <source>
    </source>
</evidence>
<evidence type="ECO:0000269" key="13">
    <source ref="4"/>
</evidence>
<evidence type="ECO:0000303" key="14">
    <source>
    </source>
</evidence>
<evidence type="ECO:0000303" key="15">
    <source>
    </source>
</evidence>
<evidence type="ECO:0000305" key="16"/>
<evidence type="ECO:0000312" key="17">
    <source>
        <dbReference type="EMBL" id="AAD40194.1"/>
    </source>
</evidence>
<evidence type="ECO:0000312" key="18">
    <source>
        <dbReference type="EMBL" id="AAF28975.1"/>
    </source>
</evidence>
<evidence type="ECO:0000312" key="19">
    <source>
        <dbReference type="HGNC" id="HGNC:30394"/>
    </source>
</evidence>
<evidence type="ECO:0007744" key="20">
    <source>
        <dbReference type="PDB" id="6DO3"/>
    </source>
</evidence>
<evidence type="ECO:0007829" key="21">
    <source>
        <dbReference type="PDB" id="6DO3"/>
    </source>
</evidence>
<sequence length="94" mass="10645">MVYISNGQVLDSRSQSPWRLSLITDFFWGIAEFVVLFFKTLLQQDVKKRRSYGNSSDSRYDDGRGPPGNPPRRMGRINHLRGPSPPPMAGGUGR</sequence>
<gene>
    <name evidence="15 19" type="primary">SELENOK</name>
    <name evidence="14" type="synonym">SELK</name>
    <name evidence="17" type="ORF">HSPC030</name>
    <name evidence="18" type="ORF">HSPC297</name>
</gene>
<keyword id="KW-0002">3D-structure</keyword>
<keyword id="KW-0106">Calcium</keyword>
<keyword id="KW-0109">Calcium transport</keyword>
<keyword id="KW-1003">Cell membrane</keyword>
<keyword id="KW-0903">Direct protein sequencing</keyword>
<keyword id="KW-0256">Endoplasmic reticulum</keyword>
<keyword id="KW-0406">Ion transport</keyword>
<keyword id="KW-0472">Membrane</keyword>
<keyword id="KW-1267">Proteomics identification</keyword>
<keyword id="KW-1185">Reference proteome</keyword>
<keyword id="KW-0712">Selenocysteine</keyword>
<keyword id="KW-0812">Transmembrane</keyword>
<keyword id="KW-1133">Transmembrane helix</keyword>
<keyword id="KW-0813">Transport</keyword>
<keyword id="KW-0832">Ubl conjugation</keyword>
<dbReference type="EMBL" id="AF537132">
    <property type="protein sequence ID" value="AAN61473.1"/>
    <property type="molecule type" value="mRNA"/>
</dbReference>
<dbReference type="EMBL" id="AF085359">
    <property type="protein sequence ID" value="AAD40194.1"/>
    <property type="status" value="ALT_SEQ"/>
    <property type="molecule type" value="mRNA"/>
</dbReference>
<dbReference type="EMBL" id="AF161415">
    <property type="protein sequence ID" value="AAF28975.1"/>
    <property type="status" value="ALT_SEQ"/>
    <property type="molecule type" value="mRNA"/>
</dbReference>
<dbReference type="EMBL" id="BC013162">
    <property type="protein sequence ID" value="AAH13162.2"/>
    <property type="molecule type" value="mRNA"/>
</dbReference>
<dbReference type="CCDS" id="CCDS54597.1"/>
<dbReference type="RefSeq" id="NP_067060.2">
    <property type="nucleotide sequence ID" value="NM_021237.4"/>
</dbReference>
<dbReference type="PDB" id="6DO3">
    <property type="method" value="X-ray"/>
    <property type="resolution" value="2.17 A"/>
    <property type="chains" value="C/D=85-91"/>
</dbReference>
<dbReference type="PDBsum" id="6DO3"/>
<dbReference type="SMR" id="Q9Y6D0"/>
<dbReference type="BioGRID" id="121841">
    <property type="interactions" value="55"/>
</dbReference>
<dbReference type="CORUM" id="Q9Y6D0"/>
<dbReference type="FunCoup" id="Q9Y6D0">
    <property type="interactions" value="867"/>
</dbReference>
<dbReference type="IntAct" id="Q9Y6D0">
    <property type="interactions" value="39"/>
</dbReference>
<dbReference type="MINT" id="Q9Y6D0"/>
<dbReference type="STRING" id="9606.ENSP00000418813"/>
<dbReference type="iPTMnet" id="Q9Y6D0"/>
<dbReference type="PhosphoSitePlus" id="Q9Y6D0"/>
<dbReference type="BioMuta" id="SELENOK"/>
<dbReference type="DMDM" id="190352222"/>
<dbReference type="jPOST" id="Q9Y6D0"/>
<dbReference type="MassIVE" id="Q9Y6D0"/>
<dbReference type="PaxDb" id="9606-ENSP00000418813"/>
<dbReference type="PeptideAtlas" id="Q9Y6D0"/>
<dbReference type="ProteomicsDB" id="86653"/>
<dbReference type="Pumba" id="Q9Y6D0"/>
<dbReference type="Antibodypedia" id="1553">
    <property type="antibodies" value="86 antibodies from 22 providers"/>
</dbReference>
<dbReference type="DNASU" id="58515"/>
<dbReference type="Ensembl" id="ENST00000495461.6">
    <property type="protein sequence ID" value="ENSP00000418813.1"/>
    <property type="gene ID" value="ENSG00000113811.12"/>
</dbReference>
<dbReference type="GeneID" id="58515"/>
<dbReference type="KEGG" id="hsa:58515"/>
<dbReference type="MANE-Select" id="ENST00000495461.6">
    <property type="protein sequence ID" value="ENSP00000418813.1"/>
    <property type="RefSeq nucleotide sequence ID" value="NM_021237.5"/>
    <property type="RefSeq protein sequence ID" value="NP_067060.2"/>
</dbReference>
<dbReference type="AGR" id="HGNC:30394"/>
<dbReference type="CTD" id="58515"/>
<dbReference type="DisGeNET" id="58515"/>
<dbReference type="GeneCards" id="SELENOK"/>
<dbReference type="HGNC" id="HGNC:30394">
    <property type="gene designation" value="SELENOK"/>
</dbReference>
<dbReference type="HPA" id="ENSG00000113811">
    <property type="expression patterns" value="Low tissue specificity"/>
</dbReference>
<dbReference type="MIM" id="607916">
    <property type="type" value="gene"/>
</dbReference>
<dbReference type="neXtProt" id="NX_Q9Y6D0"/>
<dbReference type="OpenTargets" id="ENSG00000113811"/>
<dbReference type="VEuPathDB" id="HostDB:ENSG00000113811"/>
<dbReference type="eggNOG" id="ENOG502S3PW">
    <property type="taxonomic scope" value="Eukaryota"/>
</dbReference>
<dbReference type="GeneTree" id="ENSGT00390000016119"/>
<dbReference type="InParanoid" id="Q9Y6D0"/>
<dbReference type="OMA" id="MAGGXGR"/>
<dbReference type="OrthoDB" id="167295at2759"/>
<dbReference type="PAN-GO" id="Q9Y6D0">
    <property type="GO annotations" value="4 GO annotations based on evolutionary models"/>
</dbReference>
<dbReference type="PhylomeDB" id="Q9Y6D0"/>
<dbReference type="PathwayCommons" id="Q9Y6D0"/>
<dbReference type="SignaLink" id="Q9Y6D0"/>
<dbReference type="BioGRID-ORCS" id="58515">
    <property type="hits" value="41 hits in 1110 CRISPR screens"/>
</dbReference>
<dbReference type="ChiTaRS" id="SELENOK">
    <property type="organism name" value="human"/>
</dbReference>
<dbReference type="GenomeRNAi" id="58515"/>
<dbReference type="Pharos" id="Q9Y6D0">
    <property type="development level" value="Tbio"/>
</dbReference>
<dbReference type="PRO" id="PR:Q9Y6D0"/>
<dbReference type="Proteomes" id="UP000005640">
    <property type="component" value="Chromosome 3"/>
</dbReference>
<dbReference type="RNAct" id="Q9Y6D0">
    <property type="molecule type" value="protein"/>
</dbReference>
<dbReference type="Bgee" id="ENSG00000113811">
    <property type="expression patterns" value="Expressed in left ventricle myocardium and 187 other cell types or tissues"/>
</dbReference>
<dbReference type="ExpressionAtlas" id="Q9Y6D0">
    <property type="expression patterns" value="baseline and differential"/>
</dbReference>
<dbReference type="GO" id="GO:0005783">
    <property type="term" value="C:endoplasmic reticulum"/>
    <property type="evidence" value="ECO:0000314"/>
    <property type="project" value="UniProtKB"/>
</dbReference>
<dbReference type="GO" id="GO:0005789">
    <property type="term" value="C:endoplasmic reticulum membrane"/>
    <property type="evidence" value="ECO:0000314"/>
    <property type="project" value="MGI"/>
</dbReference>
<dbReference type="GO" id="GO:0005794">
    <property type="term" value="C:Golgi apparatus"/>
    <property type="evidence" value="ECO:0000318"/>
    <property type="project" value="GO_Central"/>
</dbReference>
<dbReference type="GO" id="GO:0005886">
    <property type="term" value="C:plasma membrane"/>
    <property type="evidence" value="ECO:0007669"/>
    <property type="project" value="UniProtKB-SubCell"/>
</dbReference>
<dbReference type="GO" id="GO:0042802">
    <property type="term" value="F:identical protein binding"/>
    <property type="evidence" value="ECO:0000353"/>
    <property type="project" value="IntAct"/>
</dbReference>
<dbReference type="GO" id="GO:0006816">
    <property type="term" value="P:calcium ion transport"/>
    <property type="evidence" value="ECO:0000318"/>
    <property type="project" value="GO_Central"/>
</dbReference>
<dbReference type="GO" id="GO:0032469">
    <property type="term" value="P:endoplasmic reticulum calcium ion homeostasis"/>
    <property type="evidence" value="ECO:0000318"/>
    <property type="project" value="GO_Central"/>
</dbReference>
<dbReference type="GO" id="GO:0051649">
    <property type="term" value="P:establishment of localization in cell"/>
    <property type="evidence" value="ECO:0007669"/>
    <property type="project" value="Ensembl"/>
</dbReference>
<dbReference type="GO" id="GO:0070059">
    <property type="term" value="P:intrinsic apoptotic signaling pathway in response to endoplasmic reticulum stress"/>
    <property type="evidence" value="ECO:0000315"/>
    <property type="project" value="UniProtKB"/>
</dbReference>
<dbReference type="GO" id="GO:0010742">
    <property type="term" value="P:macrophage derived foam cell differentiation"/>
    <property type="evidence" value="ECO:0007669"/>
    <property type="project" value="Ensembl"/>
</dbReference>
<dbReference type="GO" id="GO:1990266">
    <property type="term" value="P:neutrophil migration"/>
    <property type="evidence" value="ECO:0007669"/>
    <property type="project" value="Ensembl"/>
</dbReference>
<dbReference type="GO" id="GO:0002230">
    <property type="term" value="P:positive regulation of defense response to virus by host"/>
    <property type="evidence" value="ECO:0007669"/>
    <property type="project" value="Ensembl"/>
</dbReference>
<dbReference type="GO" id="GO:0032755">
    <property type="term" value="P:positive regulation of interleukin-6 production"/>
    <property type="evidence" value="ECO:0007669"/>
    <property type="project" value="Ensembl"/>
</dbReference>
<dbReference type="GO" id="GO:0071639">
    <property type="term" value="P:positive regulation of monocyte chemotactic protein-1 production"/>
    <property type="evidence" value="ECO:0007669"/>
    <property type="project" value="Ensembl"/>
</dbReference>
<dbReference type="GO" id="GO:1902624">
    <property type="term" value="P:positive regulation of neutrophil migration"/>
    <property type="evidence" value="ECO:0007669"/>
    <property type="project" value="Ensembl"/>
</dbReference>
<dbReference type="GO" id="GO:2000406">
    <property type="term" value="P:positive regulation of T cell migration"/>
    <property type="evidence" value="ECO:0007669"/>
    <property type="project" value="Ensembl"/>
</dbReference>
<dbReference type="GO" id="GO:0042102">
    <property type="term" value="P:positive regulation of T cell proliferation"/>
    <property type="evidence" value="ECO:0007669"/>
    <property type="project" value="Ensembl"/>
</dbReference>
<dbReference type="GO" id="GO:0032760">
    <property type="term" value="P:positive regulation of tumor necrosis factor production"/>
    <property type="evidence" value="ECO:0007669"/>
    <property type="project" value="Ensembl"/>
</dbReference>
<dbReference type="GO" id="GO:0018345">
    <property type="term" value="P:protein palmitoylation"/>
    <property type="evidence" value="ECO:0000314"/>
    <property type="project" value="UniProtKB"/>
</dbReference>
<dbReference type="GO" id="GO:0050848">
    <property type="term" value="P:regulation of calcium-mediated signaling"/>
    <property type="evidence" value="ECO:0007669"/>
    <property type="project" value="Ensembl"/>
</dbReference>
<dbReference type="GO" id="GO:0051223">
    <property type="term" value="P:regulation of protein transport"/>
    <property type="evidence" value="ECO:0007669"/>
    <property type="project" value="Ensembl"/>
</dbReference>
<dbReference type="GO" id="GO:0045728">
    <property type="term" value="P:respiratory burst after phagocytosis"/>
    <property type="evidence" value="ECO:0007669"/>
    <property type="project" value="Ensembl"/>
</dbReference>
<dbReference type="GO" id="GO:0006979">
    <property type="term" value="P:response to oxidative stress"/>
    <property type="evidence" value="ECO:0000315"/>
    <property type="project" value="UniProtKB"/>
</dbReference>
<dbReference type="GO" id="GO:0072678">
    <property type="term" value="P:T cell migration"/>
    <property type="evidence" value="ECO:0007669"/>
    <property type="project" value="Ensembl"/>
</dbReference>
<dbReference type="GO" id="GO:0042098">
    <property type="term" value="P:T cell proliferation"/>
    <property type="evidence" value="ECO:0007669"/>
    <property type="project" value="Ensembl"/>
</dbReference>
<dbReference type="InterPro" id="IPR024491">
    <property type="entry name" value="Se_SelK/SelG"/>
</dbReference>
<dbReference type="PANTHER" id="PTHR16875">
    <property type="entry name" value="SELENOPROTEIN K"/>
    <property type="match status" value="1"/>
</dbReference>
<dbReference type="PANTHER" id="PTHR16875:SF0">
    <property type="entry name" value="SELENOPROTEIN K"/>
    <property type="match status" value="1"/>
</dbReference>
<dbReference type="Pfam" id="PF10961">
    <property type="entry name" value="SelK_SelG"/>
    <property type="match status" value="1"/>
</dbReference>
<feature type="initiator methionine" description="Removed" evidence="13">
    <location>
        <position position="1"/>
    </location>
</feature>
<feature type="chain" id="PRO_0000097669" description="Selenoprotein K">
    <location>
        <begin position="2"/>
        <end position="94"/>
    </location>
</feature>
<feature type="transmembrane region" description="Helical" evidence="3">
    <location>
        <begin position="20"/>
        <end position="42"/>
    </location>
</feature>
<feature type="region of interest" description="Disordered" evidence="4">
    <location>
        <begin position="48"/>
        <end position="94"/>
    </location>
</feature>
<feature type="site" description="Cleavage; by CAPN2" evidence="1">
    <location>
        <begin position="81"/>
        <end position="82"/>
    </location>
</feature>
<feature type="non-standard amino acid" description="Selenocysteine">
    <location>
        <position position="92"/>
    </location>
</feature>
<feature type="sequence variant" id="VAR_053921" description="In dbSNP:rs11562.">
    <original>R</original>
    <variation>S</variation>
    <location>
        <position position="50"/>
    </location>
</feature>
<feature type="helix" evidence="21">
    <location>
        <begin position="86"/>
        <end position="88"/>
    </location>
</feature>
<accession>Q9Y6D0</accession>
<accession>Q8IZQ3</accession>
<accession>Q9P085</accession>
<name>SELK_HUMAN</name>
<proteinExistence type="evidence at protein level"/>
<protein>
    <recommendedName>
        <fullName evidence="15">Selenoprotein K</fullName>
        <shortName evidence="14">SelK</shortName>
    </recommendedName>
</protein>
<comment type="function">
    <text evidence="2 6 7 9 10">Required for Ca(2+) flux in immune cells and plays a role in T-cell proliferation and in T-cell and neutrophil migration (By similarity). Involved in endoplasmic reticulum-associated degradation (ERAD) of soluble glycosylated proteins (PubMed:22016385). Required for palmitoylation and cell surface expression of CD36 and involved in macrophage uptake of low-density lipoprotein and in foam cell formation (By similarity). Together with ZDHHC6, required for palmitoylation of ITPR1 in immune cells, leading to regulate ITPR1 stability and function (PubMed:25368151). Plays a role in protection of cells from ER stress-induced apoptosis (PubMed:20692228). Protects cells from oxidative stress when overexpressed in cardiomyocytes (PubMed:16962588).</text>
</comment>
<comment type="subunit">
    <text evidence="9 10">Interacts with DERL1, DERL2, DERL3 and SELENOS (PubMed:22016385). The SELENOK-SELENOS complex interacts with VCP (PubMed:22016385). Interacts with ZDHHC6 (PubMed:25368151).</text>
</comment>
<comment type="interaction">
    <interactant intactId="EBI-9679163">
        <id>Q9Y6D0</id>
    </interactant>
    <interactant intactId="EBI-19125216">
        <id>Q86WK6</id>
        <label>AMIGO1</label>
    </interactant>
    <organismsDiffer>false</organismsDiffer>
    <experiments>3</experiments>
</comment>
<comment type="interaction">
    <interactant intactId="EBI-9679163">
        <id>Q9Y6D0</id>
    </interactant>
    <interactant intactId="EBI-13059134">
        <id>Q13520</id>
        <label>AQP6</label>
    </interactant>
    <organismsDiffer>false</organismsDiffer>
    <experiments>3</experiments>
</comment>
<comment type="interaction">
    <interactant intactId="EBI-9679163">
        <id>Q9Y6D0</id>
    </interactant>
    <interactant intactId="EBI-700794">
        <id>Q13323</id>
        <label>BIK</label>
    </interactant>
    <organismsDiffer>false</organismsDiffer>
    <experiments>3</experiments>
</comment>
<comment type="interaction">
    <interactant intactId="EBI-9679163">
        <id>Q9Y6D0</id>
    </interactant>
    <interactant intactId="EBI-719613">
        <id>O95873</id>
        <label>C6orf47</label>
    </interactant>
    <organismsDiffer>false</organismsDiffer>
    <experiments>3</experiments>
</comment>
<comment type="interaction">
    <interactant intactId="EBI-9679163">
        <id>Q9Y6D0</id>
    </interactant>
    <interactant intactId="EBI-2835940">
        <id>P34972</id>
        <label>CNR2</label>
    </interactant>
    <organismsDiffer>false</organismsDiffer>
    <experiments>3</experiments>
</comment>
<comment type="interaction">
    <interactant intactId="EBI-9679163">
        <id>Q9Y6D0</id>
    </interactant>
    <interactant intactId="EBI-372265">
        <id>P21964</id>
        <label>COMT</label>
    </interactant>
    <organismsDiffer>false</organismsDiffer>
    <experiments>3</experiments>
</comment>
<comment type="interaction">
    <interactant intactId="EBI-9679163">
        <id>Q9Y6D0</id>
    </interactant>
    <interactant intactId="EBI-18013275">
        <id>Q7Z7G2</id>
        <label>CPLX4</label>
    </interactant>
    <organismsDiffer>false</organismsDiffer>
    <experiments>3</experiments>
</comment>
<comment type="interaction">
    <interactant intactId="EBI-9679163">
        <id>Q9Y6D0</id>
    </interactant>
    <interactant intactId="EBI-781551">
        <id>Q9Y282</id>
        <label>ERGIC3</label>
    </interactant>
    <organismsDiffer>false</organismsDiffer>
    <experiments>3</experiments>
</comment>
<comment type="interaction">
    <interactant intactId="EBI-9679163">
        <id>Q9Y6D0</id>
    </interactant>
    <interactant intactId="EBI-18304435">
        <id>Q5JX71</id>
        <label>FAM209A</label>
    </interactant>
    <organismsDiffer>false</organismsDiffer>
    <experiments>3</experiments>
</comment>
<comment type="interaction">
    <interactant intactId="EBI-9679163">
        <id>Q9Y6D0</id>
    </interactant>
    <interactant intactId="EBI-2833872">
        <id>O15552</id>
        <label>FFAR2</label>
    </interactant>
    <organismsDiffer>false</organismsDiffer>
    <experiments>3</experiments>
</comment>
<comment type="interaction">
    <interactant intactId="EBI-9679163">
        <id>Q9Y6D0</id>
    </interactant>
    <interactant intactId="EBI-3917143">
        <id>Q5T7V8</id>
        <label>GORAB</label>
    </interactant>
    <organismsDiffer>false</organismsDiffer>
    <experiments>3</experiments>
</comment>
<comment type="interaction">
    <interactant intactId="EBI-9679163">
        <id>Q9Y6D0</id>
    </interactant>
    <interactant intactId="EBI-11721746">
        <id>Q8TED1</id>
        <label>GPX8</label>
    </interactant>
    <organismsDiffer>false</organismsDiffer>
    <experiments>3</experiments>
</comment>
<comment type="interaction">
    <interactant intactId="EBI-9679163">
        <id>Q9Y6D0</id>
    </interactant>
    <interactant intactId="EBI-1031656">
        <id>Q13651</id>
        <label>IL10RA</label>
    </interactant>
    <organismsDiffer>false</organismsDiffer>
    <experiments>3</experiments>
</comment>
<comment type="interaction">
    <interactant intactId="EBI-9679163">
        <id>Q9Y6D0</id>
    </interactant>
    <interactant intactId="EBI-2858252">
        <id>Q6ZSS7</id>
        <label>MFSD6</label>
    </interactant>
    <organismsDiffer>false</organismsDiffer>
    <experiments>3</experiments>
</comment>
<comment type="interaction">
    <interactant intactId="EBI-9679163">
        <id>Q9Y6D0</id>
    </interactant>
    <interactant intactId="EBI-17873222">
        <id>Q15546</id>
        <label>MMD</label>
    </interactant>
    <organismsDiffer>false</organismsDiffer>
    <experiments>3</experiments>
</comment>
<comment type="interaction">
    <interactant intactId="EBI-9679163">
        <id>Q9Y6D0</id>
    </interactant>
    <interactant intactId="EBI-5454865">
        <id>Q6IN84</id>
        <label>MRM1</label>
    </interactant>
    <organismsDiffer>false</organismsDiffer>
    <experiments>3</experiments>
</comment>
<comment type="interaction">
    <interactant intactId="EBI-9679163">
        <id>Q9Y6D0</id>
    </interactant>
    <interactant intactId="EBI-3923617">
        <id>Q9H2K0</id>
        <label>MTIF3</label>
    </interactant>
    <organismsDiffer>false</organismsDiffer>
    <experiments>3</experiments>
</comment>
<comment type="interaction">
    <interactant intactId="EBI-9679163">
        <id>Q9Y6D0</id>
    </interactant>
    <interactant intactId="EBI-17263240">
        <id>P15941-11</id>
        <label>MUC1</label>
    </interactant>
    <organismsDiffer>false</organismsDiffer>
    <experiments>3</experiments>
</comment>
<comment type="interaction">
    <interactant intactId="EBI-9679163">
        <id>Q9Y6D0</id>
    </interactant>
    <interactant intactId="EBI-7545592">
        <id>Q9H6H4</id>
        <label>REEP4</label>
    </interactant>
    <organismsDiffer>false</organismsDiffer>
    <experiments>3</experiments>
</comment>
<comment type="interaction">
    <interactant intactId="EBI-9679163">
        <id>Q9Y6D0</id>
    </interactant>
    <interactant intactId="EBI-2466594">
        <id>Q6ZMZ0</id>
        <label>RNF19B</label>
    </interactant>
    <organismsDiffer>false</organismsDiffer>
    <experiments>3</experiments>
</comment>
<comment type="interaction">
    <interactant intactId="EBI-9679163">
        <id>Q9Y6D0</id>
    </interactant>
    <interactant intactId="EBI-9679163">
        <id>Q9Y6D0</id>
        <label>SELENOK</label>
    </interactant>
    <organismsDiffer>false</organismsDiffer>
    <experiments>2</experiments>
</comment>
<comment type="interaction">
    <interactant intactId="EBI-9679163">
        <id>Q9Y6D0</id>
    </interactant>
    <interactant intactId="EBI-3923031">
        <id>Q14973</id>
        <label>SLC10A1</label>
    </interactant>
    <organismsDiffer>false</organismsDiffer>
    <experiments>3</experiments>
</comment>
<comment type="interaction">
    <interactant intactId="EBI-9679163">
        <id>Q9Y6D0</id>
    </interactant>
    <interactant intactId="EBI-10262251">
        <id>Q8IWU4</id>
        <label>SLC30A8</label>
    </interactant>
    <organismsDiffer>false</organismsDiffer>
    <experiments>3</experiments>
</comment>
<comment type="interaction">
    <interactant intactId="EBI-9679163">
        <id>Q9Y6D0</id>
    </interactant>
    <interactant intactId="EBI-17295964">
        <id>Q9NQQ7-3</id>
        <label>SLC35C2</label>
    </interactant>
    <organismsDiffer>false</organismsDiffer>
    <experiments>3</experiments>
</comment>
<comment type="interaction">
    <interactant intactId="EBI-9679163">
        <id>Q9Y6D0</id>
    </interactant>
    <interactant intactId="EBI-13389236">
        <id>Q7Z769</id>
        <label>SLC35E3</label>
    </interactant>
    <organismsDiffer>false</organismsDiffer>
    <experiments>3</experiments>
</comment>
<comment type="interaction">
    <interactant intactId="EBI-9679163">
        <id>Q9Y6D0</id>
    </interactant>
    <interactant intactId="EBI-20117546">
        <id>Q9H169-2</id>
        <label>STMN4</label>
    </interactant>
    <organismsDiffer>false</organismsDiffer>
    <experiments>3</experiments>
</comment>
<comment type="interaction">
    <interactant intactId="EBI-9679163">
        <id>Q9Y6D0</id>
    </interactant>
    <interactant intactId="EBI-1211440">
        <id>P27105</id>
        <label>STOM</label>
    </interactant>
    <organismsDiffer>false</organismsDiffer>
    <experiments>3</experiments>
</comment>
<comment type="interaction">
    <interactant intactId="EBI-9679163">
        <id>Q9Y6D0</id>
    </interactant>
    <interactant intactId="EBI-12345267">
        <id>O15393-2</id>
        <label>TMPRSS2</label>
    </interactant>
    <organismsDiffer>false</organismsDiffer>
    <experiments>3</experiments>
</comment>
<comment type="interaction">
    <interactant intactId="EBI-9679163">
        <id>Q9Y6D0</id>
    </interactant>
    <interactant intactId="EBI-6447886">
        <id>Q9Y320</id>
        <label>TMX2</label>
    </interactant>
    <organismsDiffer>false</organismsDiffer>
    <experiments>3</experiments>
</comment>
<comment type="subcellular location">
    <subcellularLocation>
        <location evidence="6 8 9 10">Endoplasmic reticulum membrane</location>
        <topology evidence="3">Single-pass membrane protein</topology>
    </subcellularLocation>
    <subcellularLocation>
        <location evidence="5">Cell membrane</location>
        <topology evidence="3">Single-pass membrane protein</topology>
    </subcellularLocation>
    <text evidence="8">Probably mainly localized in the ER.</text>
</comment>
<comment type="tissue specificity">
    <text evidence="6">Highly expressed in heart.</text>
</comment>
<comment type="induction">
    <text evidence="7 9">By ER stress (at protein level). Displays a slow increase with a lag phase of 6 hours but exhibits a dramatic increase after incubation with ER stress agents for more than 12 hours with maximum induction at 24 hours. Also induced by accumulation of misfolded proteins in the ER.</text>
</comment>
<comment type="PTM">
    <text evidence="2">Cleaved by CAPN2/m-calpain in resting macrophages but not in activated macrophages. Macrophage activation up-regulates expression of the calpain inhibitor CAST/calpastatin, resulting in inhibition of CAPN2 activity (By similarity).</text>
</comment>
<comment type="PTM">
    <text evidence="11 12">Truncated SELENOK proteins produced by failed UGA/Sec decoding are ubiquitinated by the CRL2(KLHDC2) complex, which recognizes the diglycine (Gly-Gly) at the C-terminus of truncated SELENOK proteins.</text>
</comment>
<comment type="similarity">
    <text evidence="16">Belongs to the selenoprotein K family.</text>
</comment>
<comment type="sequence caution" evidence="16">
    <conflict type="erroneous termination">
        <sequence resource="EMBL-CDS" id="AAD40194"/>
    </conflict>
    <text>Truncated C-terminus.</text>
</comment>
<comment type="sequence caution" evidence="16">
    <conflict type="erroneous termination">
        <sequence resource="EMBL-CDS" id="AAF28975"/>
    </conflict>
    <text>Truncated C-terminus.</text>
</comment>
<organism>
    <name type="scientific">Homo sapiens</name>
    <name type="common">Human</name>
    <dbReference type="NCBI Taxonomy" id="9606"/>
    <lineage>
        <taxon>Eukaryota</taxon>
        <taxon>Metazoa</taxon>
        <taxon>Chordata</taxon>
        <taxon>Craniata</taxon>
        <taxon>Vertebrata</taxon>
        <taxon>Euteleostomi</taxon>
        <taxon>Mammalia</taxon>
        <taxon>Eutheria</taxon>
        <taxon>Euarchontoglires</taxon>
        <taxon>Primates</taxon>
        <taxon>Haplorrhini</taxon>
        <taxon>Catarrhini</taxon>
        <taxon>Hominidae</taxon>
        <taxon>Homo</taxon>
    </lineage>
</organism>
<reference key="1">
    <citation type="journal article" date="2003" name="Science">
        <title>Characterization of mammalian selenoproteomes.</title>
        <authorList>
            <person name="Kryukov G.V."/>
            <person name="Castellano S."/>
            <person name="Novoselov S.V."/>
            <person name="Lobanov A.V."/>
            <person name="Zehtab O."/>
            <person name="Guigo R."/>
            <person name="Gladyshev V.N."/>
        </authorList>
    </citation>
    <scope>NUCLEOTIDE SEQUENCE [MRNA]</scope>
    <scope>SUBCELLULAR LOCATION</scope>
</reference>
<reference key="2">
    <citation type="journal article" date="2000" name="Genome Res.">
        <title>Cloning and functional analysis of cDNAs with open reading frames for 300 previously undefined genes expressed in CD34+ hematopoietic stem/progenitor cells.</title>
        <authorList>
            <person name="Zhang Q.-H."/>
            <person name="Ye M."/>
            <person name="Wu X.-Y."/>
            <person name="Ren S.-X."/>
            <person name="Zhao M."/>
            <person name="Zhao C.-J."/>
            <person name="Fu G."/>
            <person name="Shen Y."/>
            <person name="Fan H.-Y."/>
            <person name="Lu G."/>
            <person name="Zhong M."/>
            <person name="Xu X.-R."/>
            <person name="Han Z.-G."/>
            <person name="Zhang J.-W."/>
            <person name="Tao J."/>
            <person name="Huang Q.-H."/>
            <person name="Zhou J."/>
            <person name="Hu G.-X."/>
            <person name="Gu J."/>
            <person name="Chen S.-J."/>
            <person name="Chen Z."/>
        </authorList>
    </citation>
    <scope>NUCLEOTIDE SEQUENCE [LARGE SCALE MRNA]</scope>
    <source>
        <tissue>Umbilical cord blood</tissue>
    </source>
</reference>
<reference key="3">
    <citation type="journal article" date="2004" name="Genome Res.">
        <title>The status, quality, and expansion of the NIH full-length cDNA project: the Mammalian Gene Collection (MGC).</title>
        <authorList>
            <consortium name="The MGC Project Team"/>
        </authorList>
    </citation>
    <scope>NUCLEOTIDE SEQUENCE [LARGE SCALE MRNA]</scope>
    <source>
        <tissue>Adrenal cortex</tissue>
    </source>
</reference>
<reference key="4">
    <citation type="submission" date="2009-03" db="UniProtKB">
        <authorList>
            <person name="Bienvenut W.V."/>
            <person name="Waridel P."/>
            <person name="Quadroni M."/>
        </authorList>
    </citation>
    <scope>PROTEIN SEQUENCE OF 2-13 AND 60-72</scope>
    <scope>CLEAVAGE OF INITIATOR METHIONINE</scope>
    <scope>IDENTIFICATION BY MASS SPECTROMETRY</scope>
    <source>
        <tissue>Embryonic kidney</tissue>
    </source>
</reference>
<reference key="5">
    <citation type="journal article" date="2006" name="FEBS Lett.">
        <title>Identification and characterization of selenoprotein K: an antioxidant in cardiomyocytes.</title>
        <authorList>
            <person name="Lu C."/>
            <person name="Qiu F."/>
            <person name="Zhou H."/>
            <person name="Peng Y."/>
            <person name="Hao W."/>
            <person name="Xu J."/>
            <person name="Yuan J."/>
            <person name="Wang S."/>
            <person name="Qiang B."/>
            <person name="Xu C."/>
            <person name="Peng X."/>
        </authorList>
    </citation>
    <scope>FUNCTION</scope>
    <scope>SUBCELLULAR LOCATION</scope>
    <scope>TISSUE SPECIFICITY</scope>
</reference>
<reference key="6">
    <citation type="journal article" date="2010" name="Arch. Biochem. Biophys.">
        <title>SelK is a novel ER stress-regulated protein and protects HepG2 cells from ER stress agent-induced apoptosis.</title>
        <authorList>
            <person name="Du S."/>
            <person name="Zhou J."/>
            <person name="Jia Y."/>
            <person name="Huang K."/>
        </authorList>
    </citation>
    <scope>FUNCTION</scope>
    <scope>INDUCTION</scope>
</reference>
<reference key="7">
    <citation type="journal article" date="2011" name="BMC Syst. Biol.">
        <title>Initial characterization of the human central proteome.</title>
        <authorList>
            <person name="Burkard T.R."/>
            <person name="Planyavsky M."/>
            <person name="Kaupe I."/>
            <person name="Breitwieser F.P."/>
            <person name="Buerckstuemmer T."/>
            <person name="Bennett K.L."/>
            <person name="Superti-Furga G."/>
            <person name="Colinge J."/>
        </authorList>
    </citation>
    <scope>IDENTIFICATION BY MASS SPECTROMETRY [LARGE SCALE ANALYSIS]</scope>
</reference>
<reference key="8">
    <citation type="journal article" date="2011" name="J. Biol. Chem.">
        <title>Selenoprotein K binds multiprotein complexes and is involved in the regulation of endoplasmic reticulum homeostasis.</title>
        <authorList>
            <person name="Shchedrina V.A."/>
            <person name="Everley R.A."/>
            <person name="Zhang Y."/>
            <person name="Gygi S.P."/>
            <person name="Hatfield D.L."/>
            <person name="Gladyshev V.N."/>
        </authorList>
    </citation>
    <scope>FUNCTION</scope>
    <scope>SUBCELLULAR LOCATION</scope>
    <scope>INTERACTION WITH DERL1; DERL2; DERL3; VCP AND SELENOS</scope>
    <scope>INDUCTION</scope>
</reference>
<reference key="9">
    <citation type="journal article" date="2011" name="J. Immunol.">
        <title>Selenoprotein K knockout mice exhibit deficient calcium flux in immune cells and impaired immune responses.</title>
        <authorList>
            <person name="Verma S."/>
            <person name="Hoffmann F.W."/>
            <person name="Kumar M."/>
            <person name="Huang Z."/>
            <person name="Roe K."/>
            <person name="Nguyen-Wu E."/>
            <person name="Hashimoto A.S."/>
            <person name="Hoffmann P.R."/>
        </authorList>
    </citation>
    <scope>SUBCELLULAR LOCATION</scope>
</reference>
<reference key="10">
    <citation type="journal article" date="2012" name="Proc. Natl. Acad. Sci. U.S.A.">
        <title>N-terminal acetylome analyses and functional insights of the N-terminal acetyltransferase NatB.</title>
        <authorList>
            <person name="Van Damme P."/>
            <person name="Lasa M."/>
            <person name="Polevoda B."/>
            <person name="Gazquez C."/>
            <person name="Elosegui-Artola A."/>
            <person name="Kim D.S."/>
            <person name="De Juan-Pardo E."/>
            <person name="Demeyer K."/>
            <person name="Hole K."/>
            <person name="Larrea E."/>
            <person name="Timmerman E."/>
            <person name="Prieto J."/>
            <person name="Arnesen T."/>
            <person name="Sherman F."/>
            <person name="Gevaert K."/>
            <person name="Aldabe R."/>
        </authorList>
    </citation>
    <scope>IDENTIFICATION BY MASS SPECTROMETRY [LARGE SCALE ANALYSIS]</scope>
</reference>
<reference key="11">
    <citation type="journal article" date="2014" name="Proc. Natl. Acad. Sci. U.S.A.">
        <title>Stable expression and function of the inositol 1,4,5-triphosphate receptor requires palmitoylation by a DHHC6/selenoprotein K complex.</title>
        <authorList>
            <person name="Fredericks G.J."/>
            <person name="Hoffmann F.W."/>
            <person name="Rose A.H."/>
            <person name="Osterheld H.J."/>
            <person name="Hess F.M."/>
            <person name="Mercier F."/>
            <person name="Hoffmann P.R."/>
        </authorList>
    </citation>
    <scope>FUNCTION</scope>
    <scope>SUBCELLULAR LOCATION</scope>
    <scope>INTERACTION WITH ZDHHC6</scope>
</reference>
<reference key="12">
    <citation type="journal article" date="2015" name="Proteomics">
        <title>N-terminome analysis of the human mitochondrial proteome.</title>
        <authorList>
            <person name="Vaca Jacome A.S."/>
            <person name="Rabilloud T."/>
            <person name="Schaeffer-Reiss C."/>
            <person name="Rompais M."/>
            <person name="Ayoub D."/>
            <person name="Lane L."/>
            <person name="Bairoch A."/>
            <person name="Van Dorsselaer A."/>
            <person name="Carapito C."/>
        </authorList>
    </citation>
    <scope>IDENTIFICATION BY MASS SPECTROMETRY [LARGE SCALE ANALYSIS]</scope>
</reference>
<reference key="13">
    <citation type="journal article" date="2015" name="Science">
        <title>SELENOPROTEINS. CRL2 aids elimination of truncated selenoproteins produced by failed UGA/Sec decoding.</title>
        <authorList>
            <person name="Lin H.C."/>
            <person name="Ho S.C."/>
            <person name="Chen Y.Y."/>
            <person name="Khoo K.H."/>
            <person name="Hsu P.H."/>
            <person name="Yen H.C."/>
        </authorList>
    </citation>
    <scope>UBIQUITINATION</scope>
</reference>
<reference key="14">
    <citation type="journal article" date="2016" name="J. Biol. Chem.">
        <title>Selenoprotein gene nomenclature.</title>
        <authorList>
            <person name="Gladyshev V.N."/>
            <person name="Arner E.S."/>
            <person name="Berry M.J."/>
            <person name="Brigelius-Flohe R."/>
            <person name="Bruford E.A."/>
            <person name="Burk R.F."/>
            <person name="Carlson B.A."/>
            <person name="Castellano S."/>
            <person name="Chavatte L."/>
            <person name="Conrad M."/>
            <person name="Copeland P.R."/>
            <person name="Diamond A.M."/>
            <person name="Driscoll D.M."/>
            <person name="Ferreiro A."/>
            <person name="Flohe L."/>
            <person name="Green F.R."/>
            <person name="Guigo R."/>
            <person name="Handy D.E."/>
            <person name="Hatfield D.L."/>
            <person name="Hesketh J."/>
            <person name="Hoffmann P.R."/>
            <person name="Holmgren A."/>
            <person name="Hondal R.J."/>
            <person name="Howard M.T."/>
            <person name="Huang K."/>
            <person name="Kim H.Y."/>
            <person name="Kim I.Y."/>
            <person name="Koehrle J."/>
            <person name="Krol A."/>
            <person name="Kryukov G.V."/>
            <person name="Lee B.J."/>
            <person name="Lee B.C."/>
            <person name="Lei X.G."/>
            <person name="Liu Q."/>
            <person name="Lescure A."/>
            <person name="Lobanov A.V."/>
            <person name="Loscalzo J."/>
            <person name="Maiorino M."/>
            <person name="Mariotti M."/>
            <person name="Sandeep Prabhu K."/>
            <person name="Rayman M.P."/>
            <person name="Rozovsky S."/>
            <person name="Salinas G."/>
            <person name="Schmidt E.E."/>
            <person name="Schomburg L."/>
            <person name="Schweizer U."/>
            <person name="Simonovic M."/>
            <person name="Sunde R.A."/>
            <person name="Tsuji P.A."/>
            <person name="Tweedie S."/>
            <person name="Ursini F."/>
            <person name="Whanger P.D."/>
            <person name="Zhang Y."/>
        </authorList>
    </citation>
    <scope>NOMENCLATURE</scope>
</reference>
<reference evidence="20" key="15">
    <citation type="journal article" date="2018" name="Mol. Cell">
        <title>Recognition of the diglycine C-end degron by CRL2(KLHDC2) ubiquitin ligase.</title>
        <authorList>
            <person name="Rusnac D.V."/>
            <person name="Lin H.C."/>
            <person name="Canzani D."/>
            <person name="Tien K.X."/>
            <person name="Hinds T.R."/>
            <person name="Tsue A.F."/>
            <person name="Bush M.F."/>
            <person name="Yen H.S."/>
            <person name="Zheng N."/>
        </authorList>
    </citation>
    <scope>X-RAY CRYSTALLOGRAPHY (2.17 ANGSTROMS) OF 85-91 IN COMPLEX WITH KLHDC2</scope>
    <scope>UBIQUITINATION</scope>
</reference>